<evidence type="ECO:0000250" key="1"/>
<evidence type="ECO:0000256" key="2">
    <source>
        <dbReference type="SAM" id="MobiDB-lite"/>
    </source>
</evidence>
<evidence type="ECO:0000305" key="3"/>
<comment type="subcellular location">
    <subcellularLocation>
        <location evidence="1">Nucleus</location>
    </subcellularLocation>
</comment>
<comment type="developmental stage">
    <text>Heat shock cognate proteins are expressed constitutively during normal development.</text>
</comment>
<comment type="similarity">
    <text evidence="3">Belongs to the heat shock protein 70 family.</text>
</comment>
<dbReference type="EMBL" id="AF194819">
    <property type="protein sequence ID" value="AAF09496.1"/>
    <property type="molecule type" value="mRNA"/>
</dbReference>
<dbReference type="SMR" id="Q9U639"/>
<dbReference type="OrthoDB" id="2401965at2759"/>
<dbReference type="GO" id="GO:0005634">
    <property type="term" value="C:nucleus"/>
    <property type="evidence" value="ECO:0007669"/>
    <property type="project" value="UniProtKB-SubCell"/>
</dbReference>
<dbReference type="GO" id="GO:0005524">
    <property type="term" value="F:ATP binding"/>
    <property type="evidence" value="ECO:0007669"/>
    <property type="project" value="UniProtKB-KW"/>
</dbReference>
<dbReference type="GO" id="GO:0140662">
    <property type="term" value="F:ATP-dependent protein folding chaperone"/>
    <property type="evidence" value="ECO:0007669"/>
    <property type="project" value="InterPro"/>
</dbReference>
<dbReference type="CDD" id="cd10233">
    <property type="entry name" value="ASKHA_NBD_HSP70_HSPA1"/>
    <property type="match status" value="1"/>
</dbReference>
<dbReference type="FunFam" id="2.60.34.10:FF:000002">
    <property type="entry name" value="Heat shock 70 kDa"/>
    <property type="match status" value="1"/>
</dbReference>
<dbReference type="FunFam" id="3.30.420.40:FF:000172">
    <property type="entry name" value="Heat shock 70 kDa protein"/>
    <property type="match status" value="1"/>
</dbReference>
<dbReference type="FunFam" id="3.30.30.30:FF:000001">
    <property type="entry name" value="heat shock 70 kDa protein-like"/>
    <property type="match status" value="1"/>
</dbReference>
<dbReference type="FunFam" id="3.30.420.40:FF:000465">
    <property type="entry name" value="Heat shock cognate 70 kDa protein 2"/>
    <property type="match status" value="1"/>
</dbReference>
<dbReference type="FunFam" id="3.90.640.10:FF:000134">
    <property type="entry name" value="Heat shock cognate 71 kDa protein"/>
    <property type="match status" value="1"/>
</dbReference>
<dbReference type="FunFam" id="1.20.1270.10:FF:000003">
    <property type="entry name" value="heat shock cognate 71 kDa protein-like"/>
    <property type="match status" value="1"/>
</dbReference>
<dbReference type="FunFam" id="3.30.420.40:FF:000026">
    <property type="entry name" value="Heat shock protein 70"/>
    <property type="match status" value="1"/>
</dbReference>
<dbReference type="Gene3D" id="1.20.1270.10">
    <property type="match status" value="1"/>
</dbReference>
<dbReference type="Gene3D" id="3.30.30.30">
    <property type="match status" value="1"/>
</dbReference>
<dbReference type="Gene3D" id="3.30.420.40">
    <property type="match status" value="2"/>
</dbReference>
<dbReference type="Gene3D" id="3.90.640.10">
    <property type="entry name" value="Actin, Chain A, domain 4"/>
    <property type="match status" value="1"/>
</dbReference>
<dbReference type="Gene3D" id="2.60.34.10">
    <property type="entry name" value="Substrate Binding Domain Of DNAk, Chain A, domain 1"/>
    <property type="match status" value="1"/>
</dbReference>
<dbReference type="InterPro" id="IPR043129">
    <property type="entry name" value="ATPase_NBD"/>
</dbReference>
<dbReference type="InterPro" id="IPR018181">
    <property type="entry name" value="Heat_shock_70_CS"/>
</dbReference>
<dbReference type="InterPro" id="IPR029048">
    <property type="entry name" value="HSP70_C_sf"/>
</dbReference>
<dbReference type="InterPro" id="IPR029047">
    <property type="entry name" value="HSP70_peptide-bd_sf"/>
</dbReference>
<dbReference type="InterPro" id="IPR013126">
    <property type="entry name" value="Hsp_70_fam"/>
</dbReference>
<dbReference type="NCBIfam" id="NF001413">
    <property type="entry name" value="PRK00290.1"/>
    <property type="match status" value="1"/>
</dbReference>
<dbReference type="PANTHER" id="PTHR19375">
    <property type="entry name" value="HEAT SHOCK PROTEIN 70KDA"/>
    <property type="match status" value="1"/>
</dbReference>
<dbReference type="Pfam" id="PF00012">
    <property type="entry name" value="HSP70"/>
    <property type="match status" value="1"/>
</dbReference>
<dbReference type="PRINTS" id="PR00301">
    <property type="entry name" value="HEATSHOCK70"/>
</dbReference>
<dbReference type="SUPFAM" id="SSF53067">
    <property type="entry name" value="Actin-like ATPase domain"/>
    <property type="match status" value="2"/>
</dbReference>
<dbReference type="SUPFAM" id="SSF100934">
    <property type="entry name" value="Heat shock protein 70kD (HSP70), C-terminal subdomain"/>
    <property type="match status" value="1"/>
</dbReference>
<dbReference type="SUPFAM" id="SSF100920">
    <property type="entry name" value="Heat shock protein 70kD (HSP70), peptide-binding domain"/>
    <property type="match status" value="1"/>
</dbReference>
<dbReference type="PROSITE" id="PS00297">
    <property type="entry name" value="HSP70_1"/>
    <property type="match status" value="1"/>
</dbReference>
<dbReference type="PROSITE" id="PS00329">
    <property type="entry name" value="HSP70_2"/>
    <property type="match status" value="1"/>
</dbReference>
<dbReference type="PROSITE" id="PS01036">
    <property type="entry name" value="HSP70_3"/>
    <property type="match status" value="1"/>
</dbReference>
<name>HSP7D_MANSE</name>
<reference key="1">
    <citation type="journal article" date="2000" name="Insect Biochem. Mol. Biol.">
        <title>cDNA cloning and expression of a hormone-regulated heat shock protein (hsc 70) from the prothoracic gland of Manduca sexta.</title>
        <authorList>
            <person name="Rybczynski R."/>
            <person name="Gilbert L.I."/>
        </authorList>
    </citation>
    <scope>NUCLEOTIDE SEQUENCE [MRNA]</scope>
    <source>
        <tissue>Prothoracic gland</tissue>
    </source>
</reference>
<keyword id="KW-0067">ATP-binding</keyword>
<keyword id="KW-0547">Nucleotide-binding</keyword>
<keyword id="KW-0539">Nucleus</keyword>
<keyword id="KW-0346">Stress response</keyword>
<proteinExistence type="evidence at transcript level"/>
<feature type="chain" id="PRO_0000078341" description="Heat shock 70 kDa protein cognate 4">
    <location>
        <begin position="1"/>
        <end position="652"/>
    </location>
</feature>
<feature type="region of interest" description="Disordered" evidence="2">
    <location>
        <begin position="624"/>
        <end position="652"/>
    </location>
</feature>
<feature type="compositionally biased region" description="Gly residues" evidence="2">
    <location>
        <begin position="624"/>
        <end position="645"/>
    </location>
</feature>
<organism>
    <name type="scientific">Manduca sexta</name>
    <name type="common">Tobacco hawkmoth</name>
    <name type="synonym">Tobacco hornworm</name>
    <dbReference type="NCBI Taxonomy" id="7130"/>
    <lineage>
        <taxon>Eukaryota</taxon>
        <taxon>Metazoa</taxon>
        <taxon>Ecdysozoa</taxon>
        <taxon>Arthropoda</taxon>
        <taxon>Hexapoda</taxon>
        <taxon>Insecta</taxon>
        <taxon>Pterygota</taxon>
        <taxon>Neoptera</taxon>
        <taxon>Endopterygota</taxon>
        <taxon>Lepidoptera</taxon>
        <taxon>Glossata</taxon>
        <taxon>Ditrysia</taxon>
        <taxon>Bombycoidea</taxon>
        <taxon>Sphingidae</taxon>
        <taxon>Sphinginae</taxon>
        <taxon>Sphingini</taxon>
        <taxon>Manduca</taxon>
    </lineage>
</organism>
<protein>
    <recommendedName>
        <fullName>Heat shock 70 kDa protein cognate 4</fullName>
        <shortName>Hsc 70-4</shortName>
    </recommendedName>
</protein>
<accession>Q9U639</accession>
<sequence length="652" mass="71432">MAKAPAVGIDLGTTYSCVGVFQHGKVEIIANDQGNRTTPSYVAFTDTDRLIGDAAKNQVAMNPNNTIFDAKRLIGRKFEDATVQADMKHWPFEVVSDGGKPKIKVAYKGEDKTFFPEEVSSMVLTKMKETAEAYLGKTVQNAVITVPAYFNDSQRQATKDAGTISGLNVLRIINEPTAAAIAYGLDKKGSGERNVLIFDLGGGTFDVSILTIEDGIFEVKSTAGDTHLGGEDFDNRMVNHFVQEFKRKYKKDLTTNKRALRRLRTACERAKRTLSSSTQASIEIDSLFEGIDFYTSITRARFEELNADLFRSTMEPVEKSLRDAKMDKSQIHDIVLVGGSTRIPKVQKLLQDFFNGKELNKSINPDEAVAYGAAVQAAILHGDKSEEVQDLLLLDVTPLSLGIETAGGVMTTLIKRNTTIPTKQTQTFTTYSDNQPGVLIQVFEGERAMTKDNNLLGKFELTGIPPAPRGVPQIEVTFDIDANGILNVSAVEKSTNKENKITITNDKGRLSKEEIERMVNEAEKYRNEDEKQKETIQAKNALESYCFNMKSTMEDEKLKDKISDSDKQTILDKCNDTIKWLDSNQLADKEEYEHKQKELEGICNPIITKLYQGAGGMPGGMPGGMPGFPGGAPGAGGAAPGGGAGPTIEEVD</sequence>